<keyword id="KW-0028">Amino-acid biosynthesis</keyword>
<keyword id="KW-0198">Cysteine biosynthesis</keyword>
<keyword id="KW-0663">Pyridoxal phosphate</keyword>
<keyword id="KW-1185">Reference proteome</keyword>
<keyword id="KW-0808">Transferase</keyword>
<protein>
    <recommendedName>
        <fullName>Cysteine synthase</fullName>
        <shortName>CSase</shortName>
        <ecNumber>2.5.1.47</ecNumber>
    </recommendedName>
    <alternativeName>
        <fullName>O-acetylserine (thiol)-lyase</fullName>
        <shortName>OAS-TL</shortName>
    </alternativeName>
    <alternativeName>
        <fullName>O-acetylserine sulfhydrylase</fullName>
    </alternativeName>
</protein>
<sequence>MKIANSITELIGNTPLVKLNRLTEGLKAEVAVKLEFFNPGSSVKDRIAEAMIEGAEKAGKINKNTVIVEATSGNTGVGLAMVCAARGYKLAITMPESMSKERKMLLRAFGAELILTPAAEGMAGAIAKAKSLVDAHPDTYFMPRQFDNEANPEVHRKTTAEEIWRDTDGKVDVFVAGVGTGGTITGVGEVLKKYKPEVKVVAVEPEASPVLSGGEKGPHPIQGIGAGFIPTVLNTKIYDSITKVSNEAAFETARAIAEKEGILVGISSGAAVWSALQLAKQPENEGKLIVVLLPSYGERYLSTPLFADLA</sequence>
<evidence type="ECO:0000250" key="1"/>
<evidence type="ECO:0000305" key="2"/>
<accession>Q7DDL5</accession>
<comment type="catalytic activity">
    <reaction>
        <text>O-acetyl-L-serine + hydrogen sulfide = L-cysteine + acetate</text>
        <dbReference type="Rhea" id="RHEA:14829"/>
        <dbReference type="ChEBI" id="CHEBI:29919"/>
        <dbReference type="ChEBI" id="CHEBI:30089"/>
        <dbReference type="ChEBI" id="CHEBI:35235"/>
        <dbReference type="ChEBI" id="CHEBI:58340"/>
        <dbReference type="EC" id="2.5.1.47"/>
    </reaction>
</comment>
<comment type="cofactor">
    <cofactor evidence="1">
        <name>pyridoxal 5'-phosphate</name>
        <dbReference type="ChEBI" id="CHEBI:597326"/>
    </cofactor>
</comment>
<comment type="pathway">
    <text>Amino-acid biosynthesis; L-cysteine biosynthesis; L-cysteine from L-serine: step 2/2.</text>
</comment>
<comment type="miscellaneous">
    <text>Present in outer membrane vesicle formulations which are used as vaccines in human.</text>
</comment>
<comment type="similarity">
    <text evidence="2">Belongs to the cysteine synthase/cystathionine beta-synthase family.</text>
</comment>
<gene>
    <name type="primary">cysK</name>
    <name type="ordered locus">NMB0763</name>
</gene>
<dbReference type="EC" id="2.5.1.47"/>
<dbReference type="EMBL" id="AE002098">
    <property type="protein sequence ID" value="AAF41176.1"/>
    <property type="molecule type" value="Genomic_DNA"/>
</dbReference>
<dbReference type="PIR" id="H81161">
    <property type="entry name" value="H81161"/>
</dbReference>
<dbReference type="RefSeq" id="NP_273805.1">
    <property type="nucleotide sequence ID" value="NC_003112.2"/>
</dbReference>
<dbReference type="RefSeq" id="WP_002217611.1">
    <property type="nucleotide sequence ID" value="NC_003112.2"/>
</dbReference>
<dbReference type="SMR" id="Q7DDL5"/>
<dbReference type="FunCoup" id="Q7DDL5">
    <property type="interactions" value="439"/>
</dbReference>
<dbReference type="STRING" id="122586.NMB0763"/>
<dbReference type="PaxDb" id="122586-NMB0763"/>
<dbReference type="GeneID" id="93386408"/>
<dbReference type="KEGG" id="nme:NMB0763"/>
<dbReference type="PATRIC" id="fig|122586.8.peg.967"/>
<dbReference type="HOGENOM" id="CLU_021018_1_0_4"/>
<dbReference type="InParanoid" id="Q7DDL5"/>
<dbReference type="OrthoDB" id="9805733at2"/>
<dbReference type="UniPathway" id="UPA00136">
    <property type="reaction ID" value="UER00200"/>
</dbReference>
<dbReference type="Proteomes" id="UP000000425">
    <property type="component" value="Chromosome"/>
</dbReference>
<dbReference type="GO" id="GO:0005737">
    <property type="term" value="C:cytoplasm"/>
    <property type="evidence" value="ECO:0000318"/>
    <property type="project" value="GO_Central"/>
</dbReference>
<dbReference type="GO" id="GO:0004124">
    <property type="term" value="F:cysteine synthase activity"/>
    <property type="evidence" value="ECO:0000318"/>
    <property type="project" value="GO_Central"/>
</dbReference>
<dbReference type="GO" id="GO:0080146">
    <property type="term" value="F:L-cysteine desulfhydrase activity"/>
    <property type="evidence" value="ECO:0000318"/>
    <property type="project" value="GO_Central"/>
</dbReference>
<dbReference type="GO" id="GO:0006535">
    <property type="term" value="P:cysteine biosynthetic process from serine"/>
    <property type="evidence" value="ECO:0000318"/>
    <property type="project" value="GO_Central"/>
</dbReference>
<dbReference type="CDD" id="cd01561">
    <property type="entry name" value="CBS_like"/>
    <property type="match status" value="1"/>
</dbReference>
<dbReference type="FunFam" id="3.40.50.1100:FF:000002">
    <property type="entry name" value="Cysteine synthase"/>
    <property type="match status" value="1"/>
</dbReference>
<dbReference type="FunFam" id="3.40.50.1100:FF:000006">
    <property type="entry name" value="Cysteine synthase"/>
    <property type="match status" value="1"/>
</dbReference>
<dbReference type="Gene3D" id="3.40.50.1100">
    <property type="match status" value="2"/>
</dbReference>
<dbReference type="InterPro" id="IPR005856">
    <property type="entry name" value="Cys_synth"/>
</dbReference>
<dbReference type="InterPro" id="IPR050214">
    <property type="entry name" value="Cys_Synth/Cystath_Beta-Synth"/>
</dbReference>
<dbReference type="InterPro" id="IPR005859">
    <property type="entry name" value="CysK"/>
</dbReference>
<dbReference type="InterPro" id="IPR001216">
    <property type="entry name" value="P-phosphate_BS"/>
</dbReference>
<dbReference type="InterPro" id="IPR001926">
    <property type="entry name" value="TrpB-like_PALP"/>
</dbReference>
<dbReference type="InterPro" id="IPR036052">
    <property type="entry name" value="TrpB-like_PALP_sf"/>
</dbReference>
<dbReference type="NCBIfam" id="TIGR01139">
    <property type="entry name" value="cysK"/>
    <property type="match status" value="1"/>
</dbReference>
<dbReference type="NCBIfam" id="TIGR01136">
    <property type="entry name" value="cysKM"/>
    <property type="match status" value="1"/>
</dbReference>
<dbReference type="PANTHER" id="PTHR10314">
    <property type="entry name" value="CYSTATHIONINE BETA-SYNTHASE"/>
    <property type="match status" value="1"/>
</dbReference>
<dbReference type="Pfam" id="PF00291">
    <property type="entry name" value="PALP"/>
    <property type="match status" value="1"/>
</dbReference>
<dbReference type="SUPFAM" id="SSF53686">
    <property type="entry name" value="Tryptophan synthase beta subunit-like PLP-dependent enzymes"/>
    <property type="match status" value="1"/>
</dbReference>
<dbReference type="PROSITE" id="PS00901">
    <property type="entry name" value="CYS_SYNTHASE"/>
    <property type="match status" value="1"/>
</dbReference>
<name>CYSK_NEIMB</name>
<proteinExistence type="evidence at protein level"/>
<reference key="1">
    <citation type="journal article" date="2000" name="Science">
        <title>Complete genome sequence of Neisseria meningitidis serogroup B strain MC58.</title>
        <authorList>
            <person name="Tettelin H."/>
            <person name="Saunders N.J."/>
            <person name="Heidelberg J.F."/>
            <person name="Jeffries A.C."/>
            <person name="Nelson K.E."/>
            <person name="Eisen J.A."/>
            <person name="Ketchum K.A."/>
            <person name="Hood D.W."/>
            <person name="Peden J.F."/>
            <person name="Dodson R.J."/>
            <person name="Nelson W.C."/>
            <person name="Gwinn M.L."/>
            <person name="DeBoy R.T."/>
            <person name="Peterson J.D."/>
            <person name="Hickey E.K."/>
            <person name="Haft D.H."/>
            <person name="Salzberg S.L."/>
            <person name="White O."/>
            <person name="Fleischmann R.D."/>
            <person name="Dougherty B.A."/>
            <person name="Mason T.M."/>
            <person name="Ciecko A."/>
            <person name="Parksey D.S."/>
            <person name="Blair E."/>
            <person name="Cittone H."/>
            <person name="Clark E.B."/>
            <person name="Cotton M.D."/>
            <person name="Utterback T.R."/>
            <person name="Khouri H.M."/>
            <person name="Qin H."/>
            <person name="Vamathevan J.J."/>
            <person name="Gill J."/>
            <person name="Scarlato V."/>
            <person name="Masignani V."/>
            <person name="Pizza M."/>
            <person name="Grandi G."/>
            <person name="Sun L."/>
            <person name="Smith H.O."/>
            <person name="Fraser C.M."/>
            <person name="Moxon E.R."/>
            <person name="Rappuoli R."/>
            <person name="Venter J.C."/>
        </authorList>
    </citation>
    <scope>NUCLEOTIDE SEQUENCE [LARGE SCALE GENOMIC DNA]</scope>
    <source>
        <strain>ATCC BAA-335 / MC58</strain>
    </source>
</reference>
<reference key="2">
    <citation type="journal article" date="2005" name="Hum. Vaccin.">
        <title>Characterization of the protein content of a meningococcal outer membrane vesicle vaccine by polyacrylamide gel electrophoresis and mass spectrometry.</title>
        <authorList>
            <person name="Vipond C."/>
            <person name="Wheeler J.X."/>
            <person name="Jones C."/>
            <person name="Feavers I.M."/>
            <person name="Suker J."/>
        </authorList>
    </citation>
    <scope>IDENTIFICATION BY MASS SPECTROMETRY [LARGE SCALE ANALYSIS]</scope>
</reference>
<reference key="3">
    <citation type="journal article" date="2006" name="Proteomics">
        <title>Proteomic analysis of a meningococcal outer membrane vesicle vaccine prepared from the group B strain NZ98/254.</title>
        <authorList>
            <person name="Vipond C."/>
            <person name="Suker J."/>
            <person name="Jones C."/>
            <person name="Tang C."/>
            <person name="Feavers I.M."/>
            <person name="Wheeler J.X."/>
        </authorList>
    </citation>
    <scope>IDENTIFICATION BY MASS SPECTROMETRY [LARGE SCALE ANALYSIS]</scope>
    <source>
        <strain>NZ98/254 / Serogroup B</strain>
    </source>
</reference>
<feature type="chain" id="PRO_0000320266" description="Cysteine synthase">
    <location>
        <begin position="1"/>
        <end position="310"/>
    </location>
</feature>
<feature type="binding site" evidence="1">
    <location>
        <position position="74"/>
    </location>
    <ligand>
        <name>pyridoxal 5'-phosphate</name>
        <dbReference type="ChEBI" id="CHEBI:597326"/>
    </ligand>
</feature>
<feature type="binding site" evidence="1">
    <location>
        <begin position="179"/>
        <end position="183"/>
    </location>
    <ligand>
        <name>pyridoxal 5'-phosphate</name>
        <dbReference type="ChEBI" id="CHEBI:597326"/>
    </ligand>
</feature>
<feature type="binding site" evidence="1">
    <location>
        <position position="267"/>
    </location>
    <ligand>
        <name>pyridoxal 5'-phosphate</name>
        <dbReference type="ChEBI" id="CHEBI:597326"/>
    </ligand>
</feature>
<feature type="modified residue" description="N6-(pyridoxal phosphate)lysine" evidence="1">
    <location>
        <position position="44"/>
    </location>
</feature>
<organism>
    <name type="scientific">Neisseria meningitidis serogroup B (strain ATCC BAA-335 / MC58)</name>
    <dbReference type="NCBI Taxonomy" id="122586"/>
    <lineage>
        <taxon>Bacteria</taxon>
        <taxon>Pseudomonadati</taxon>
        <taxon>Pseudomonadota</taxon>
        <taxon>Betaproteobacteria</taxon>
        <taxon>Neisseriales</taxon>
        <taxon>Neisseriaceae</taxon>
        <taxon>Neisseria</taxon>
    </lineage>
</organism>